<gene>
    <name evidence="1" type="primary">rpsT</name>
    <name type="ordered locus">Sbal_1051</name>
</gene>
<protein>
    <recommendedName>
        <fullName evidence="1">Small ribosomal subunit protein bS20</fullName>
    </recommendedName>
    <alternativeName>
        <fullName evidence="3">30S ribosomal protein S20</fullName>
    </alternativeName>
</protein>
<evidence type="ECO:0000255" key="1">
    <source>
        <dbReference type="HAMAP-Rule" id="MF_00500"/>
    </source>
</evidence>
<evidence type="ECO:0000256" key="2">
    <source>
        <dbReference type="SAM" id="MobiDB-lite"/>
    </source>
</evidence>
<evidence type="ECO:0000305" key="3"/>
<comment type="function">
    <text evidence="1">Binds directly to 16S ribosomal RNA.</text>
</comment>
<comment type="similarity">
    <text evidence="1">Belongs to the bacterial ribosomal protein bS20 family.</text>
</comment>
<sequence>MANSKSAKKRALQSEKRRQHNASRRSMLRTYVKKVIAAIKAGDHKTAAEAFAVAQPIVDRMATKGLIHKNKAARQKARLNAKIKAIAA</sequence>
<keyword id="KW-1185">Reference proteome</keyword>
<keyword id="KW-0687">Ribonucleoprotein</keyword>
<keyword id="KW-0689">Ribosomal protein</keyword>
<keyword id="KW-0694">RNA-binding</keyword>
<keyword id="KW-0699">rRNA-binding</keyword>
<reference key="1">
    <citation type="submission" date="2007-02" db="EMBL/GenBank/DDBJ databases">
        <title>Complete sequence of chromosome of Shewanella baltica OS155.</title>
        <authorList>
            <consortium name="US DOE Joint Genome Institute"/>
            <person name="Copeland A."/>
            <person name="Lucas S."/>
            <person name="Lapidus A."/>
            <person name="Barry K."/>
            <person name="Detter J.C."/>
            <person name="Glavina del Rio T."/>
            <person name="Hammon N."/>
            <person name="Israni S."/>
            <person name="Dalin E."/>
            <person name="Tice H."/>
            <person name="Pitluck S."/>
            <person name="Sims D.R."/>
            <person name="Brettin T."/>
            <person name="Bruce D."/>
            <person name="Han C."/>
            <person name="Tapia R."/>
            <person name="Brainard J."/>
            <person name="Schmutz J."/>
            <person name="Larimer F."/>
            <person name="Land M."/>
            <person name="Hauser L."/>
            <person name="Kyrpides N."/>
            <person name="Mikhailova N."/>
            <person name="Brettar I."/>
            <person name="Klappenbach J."/>
            <person name="Konstantinidis K."/>
            <person name="Rodrigues J."/>
            <person name="Tiedje J."/>
            <person name="Richardson P."/>
        </authorList>
    </citation>
    <scope>NUCLEOTIDE SEQUENCE [LARGE SCALE GENOMIC DNA]</scope>
    <source>
        <strain>OS155 / ATCC BAA-1091</strain>
    </source>
</reference>
<organism>
    <name type="scientific">Shewanella baltica (strain OS155 / ATCC BAA-1091)</name>
    <dbReference type="NCBI Taxonomy" id="325240"/>
    <lineage>
        <taxon>Bacteria</taxon>
        <taxon>Pseudomonadati</taxon>
        <taxon>Pseudomonadota</taxon>
        <taxon>Gammaproteobacteria</taxon>
        <taxon>Alteromonadales</taxon>
        <taxon>Shewanellaceae</taxon>
        <taxon>Shewanella</taxon>
    </lineage>
</organism>
<proteinExistence type="inferred from homology"/>
<dbReference type="EMBL" id="CP000563">
    <property type="protein sequence ID" value="ABN60575.1"/>
    <property type="molecule type" value="Genomic_DNA"/>
</dbReference>
<dbReference type="RefSeq" id="WP_006080633.1">
    <property type="nucleotide sequence ID" value="NC_009052.1"/>
</dbReference>
<dbReference type="SMR" id="A3D1G2"/>
<dbReference type="STRING" id="325240.Sbal_1051"/>
<dbReference type="GeneID" id="11771433"/>
<dbReference type="KEGG" id="sbl:Sbal_1051"/>
<dbReference type="HOGENOM" id="CLU_160655_4_0_6"/>
<dbReference type="OrthoDB" id="9807974at2"/>
<dbReference type="Proteomes" id="UP000001557">
    <property type="component" value="Chromosome"/>
</dbReference>
<dbReference type="GO" id="GO:0005829">
    <property type="term" value="C:cytosol"/>
    <property type="evidence" value="ECO:0007669"/>
    <property type="project" value="TreeGrafter"/>
</dbReference>
<dbReference type="GO" id="GO:0015935">
    <property type="term" value="C:small ribosomal subunit"/>
    <property type="evidence" value="ECO:0007669"/>
    <property type="project" value="TreeGrafter"/>
</dbReference>
<dbReference type="GO" id="GO:0070181">
    <property type="term" value="F:small ribosomal subunit rRNA binding"/>
    <property type="evidence" value="ECO:0007669"/>
    <property type="project" value="TreeGrafter"/>
</dbReference>
<dbReference type="GO" id="GO:0003735">
    <property type="term" value="F:structural constituent of ribosome"/>
    <property type="evidence" value="ECO:0007669"/>
    <property type="project" value="InterPro"/>
</dbReference>
<dbReference type="GO" id="GO:0006412">
    <property type="term" value="P:translation"/>
    <property type="evidence" value="ECO:0007669"/>
    <property type="project" value="UniProtKB-UniRule"/>
</dbReference>
<dbReference type="FunFam" id="1.20.58.110:FF:000001">
    <property type="entry name" value="30S ribosomal protein S20"/>
    <property type="match status" value="1"/>
</dbReference>
<dbReference type="Gene3D" id="1.20.58.110">
    <property type="entry name" value="Ribosomal protein S20"/>
    <property type="match status" value="1"/>
</dbReference>
<dbReference type="HAMAP" id="MF_00500">
    <property type="entry name" value="Ribosomal_bS20"/>
    <property type="match status" value="1"/>
</dbReference>
<dbReference type="InterPro" id="IPR002583">
    <property type="entry name" value="Ribosomal_bS20"/>
</dbReference>
<dbReference type="InterPro" id="IPR036510">
    <property type="entry name" value="Ribosomal_bS20_sf"/>
</dbReference>
<dbReference type="NCBIfam" id="TIGR00029">
    <property type="entry name" value="S20"/>
    <property type="match status" value="1"/>
</dbReference>
<dbReference type="PANTHER" id="PTHR33398">
    <property type="entry name" value="30S RIBOSOMAL PROTEIN S20"/>
    <property type="match status" value="1"/>
</dbReference>
<dbReference type="PANTHER" id="PTHR33398:SF1">
    <property type="entry name" value="SMALL RIBOSOMAL SUBUNIT PROTEIN BS20C"/>
    <property type="match status" value="1"/>
</dbReference>
<dbReference type="Pfam" id="PF01649">
    <property type="entry name" value="Ribosomal_S20p"/>
    <property type="match status" value="1"/>
</dbReference>
<dbReference type="SUPFAM" id="SSF46992">
    <property type="entry name" value="Ribosomal protein S20"/>
    <property type="match status" value="1"/>
</dbReference>
<feature type="chain" id="PRO_1000014648" description="Small ribosomal subunit protein bS20">
    <location>
        <begin position="1"/>
        <end position="88"/>
    </location>
</feature>
<feature type="region of interest" description="Disordered" evidence="2">
    <location>
        <begin position="1"/>
        <end position="27"/>
    </location>
</feature>
<accession>A3D1G2</accession>
<name>RS20_SHEB5</name>